<proteinExistence type="inferred from homology"/>
<organism>
    <name type="scientific">Shigella flexneri serotype 5b (strain 8401)</name>
    <dbReference type="NCBI Taxonomy" id="373384"/>
    <lineage>
        <taxon>Bacteria</taxon>
        <taxon>Pseudomonadati</taxon>
        <taxon>Pseudomonadota</taxon>
        <taxon>Gammaproteobacteria</taxon>
        <taxon>Enterobacterales</taxon>
        <taxon>Enterobacteriaceae</taxon>
        <taxon>Shigella</taxon>
    </lineage>
</organism>
<keyword id="KW-0687">Ribonucleoprotein</keyword>
<keyword id="KW-0689">Ribosomal protein</keyword>
<sequence>MSITKDQIIEAVAAMSVMDVVELISAMEEKFGVSAAAAVAVAAGPVEAAEEKTEFDVILKAAGANKVAVIKAVRGATGLGLKEAKDLVESAPAALKEGVSKDDAEALKKALEEAGAEVEVK</sequence>
<gene>
    <name evidence="1" type="primary">rplL</name>
    <name type="ordered locus">SFV_4058</name>
</gene>
<comment type="function">
    <text evidence="1">Forms part of the ribosomal stalk which helps the ribosome interact with GTP-bound translation factors. Is thus essential for accurate translation.</text>
</comment>
<comment type="subunit">
    <text evidence="1">Homodimer. Part of the ribosomal stalk of the 50S ribosomal subunit. Forms a multimeric L10(L12)X complex, where L10 forms an elongated spine to which 2 to 4 L12 dimers bind in a sequential fashion. Binds GTP-bound translation factors.</text>
</comment>
<comment type="similarity">
    <text evidence="1">Belongs to the bacterial ribosomal protein bL12 family.</text>
</comment>
<protein>
    <recommendedName>
        <fullName evidence="1">Large ribosomal subunit protein bL12</fullName>
    </recommendedName>
    <alternativeName>
        <fullName evidence="2">50S ribosomal protein L7/L12</fullName>
    </alternativeName>
</protein>
<dbReference type="EMBL" id="CP000266">
    <property type="protein sequence ID" value="ABF06051.1"/>
    <property type="molecule type" value="Genomic_DNA"/>
</dbReference>
<dbReference type="RefSeq" id="WP_000028878.1">
    <property type="nucleotide sequence ID" value="NC_008258.1"/>
</dbReference>
<dbReference type="SMR" id="Q0SY14"/>
<dbReference type="GeneID" id="86944525"/>
<dbReference type="KEGG" id="sfv:SFV_4058"/>
<dbReference type="HOGENOM" id="CLU_086499_3_2_6"/>
<dbReference type="Proteomes" id="UP000000659">
    <property type="component" value="Chromosome"/>
</dbReference>
<dbReference type="GO" id="GO:0022625">
    <property type="term" value="C:cytosolic large ribosomal subunit"/>
    <property type="evidence" value="ECO:0007669"/>
    <property type="project" value="TreeGrafter"/>
</dbReference>
<dbReference type="GO" id="GO:0003729">
    <property type="term" value="F:mRNA binding"/>
    <property type="evidence" value="ECO:0007669"/>
    <property type="project" value="TreeGrafter"/>
</dbReference>
<dbReference type="GO" id="GO:0003735">
    <property type="term" value="F:structural constituent of ribosome"/>
    <property type="evidence" value="ECO:0007669"/>
    <property type="project" value="InterPro"/>
</dbReference>
<dbReference type="GO" id="GO:0006412">
    <property type="term" value="P:translation"/>
    <property type="evidence" value="ECO:0007669"/>
    <property type="project" value="UniProtKB-UniRule"/>
</dbReference>
<dbReference type="CDD" id="cd00387">
    <property type="entry name" value="Ribosomal_L7_L12"/>
    <property type="match status" value="1"/>
</dbReference>
<dbReference type="FunFam" id="1.20.5.710:FF:000001">
    <property type="entry name" value="50S ribosomal protein L7/L12"/>
    <property type="match status" value="1"/>
</dbReference>
<dbReference type="FunFam" id="3.30.1390.10:FF:000001">
    <property type="entry name" value="50S ribosomal protein L7/L12"/>
    <property type="match status" value="1"/>
</dbReference>
<dbReference type="Gene3D" id="3.30.1390.10">
    <property type="match status" value="1"/>
</dbReference>
<dbReference type="Gene3D" id="1.20.5.710">
    <property type="entry name" value="Single helix bin"/>
    <property type="match status" value="1"/>
</dbReference>
<dbReference type="HAMAP" id="MF_00368">
    <property type="entry name" value="Ribosomal_bL12"/>
    <property type="match status" value="1"/>
</dbReference>
<dbReference type="InterPro" id="IPR000206">
    <property type="entry name" value="Ribosomal_bL12"/>
</dbReference>
<dbReference type="InterPro" id="IPR013823">
    <property type="entry name" value="Ribosomal_bL12_C"/>
</dbReference>
<dbReference type="InterPro" id="IPR014719">
    <property type="entry name" value="Ribosomal_bL12_C/ClpS-like"/>
</dbReference>
<dbReference type="InterPro" id="IPR008932">
    <property type="entry name" value="Ribosomal_bL12_oligo"/>
</dbReference>
<dbReference type="InterPro" id="IPR036235">
    <property type="entry name" value="Ribosomal_bL12_oligo_N_sf"/>
</dbReference>
<dbReference type="NCBIfam" id="TIGR00855">
    <property type="entry name" value="L12"/>
    <property type="match status" value="1"/>
</dbReference>
<dbReference type="PANTHER" id="PTHR45987">
    <property type="entry name" value="39S RIBOSOMAL PROTEIN L12"/>
    <property type="match status" value="1"/>
</dbReference>
<dbReference type="PANTHER" id="PTHR45987:SF4">
    <property type="entry name" value="LARGE RIBOSOMAL SUBUNIT PROTEIN BL12M"/>
    <property type="match status" value="1"/>
</dbReference>
<dbReference type="Pfam" id="PF00542">
    <property type="entry name" value="Ribosomal_L12"/>
    <property type="match status" value="1"/>
</dbReference>
<dbReference type="Pfam" id="PF16320">
    <property type="entry name" value="Ribosomal_L12_N"/>
    <property type="match status" value="1"/>
</dbReference>
<dbReference type="SUPFAM" id="SSF54736">
    <property type="entry name" value="ClpS-like"/>
    <property type="match status" value="1"/>
</dbReference>
<dbReference type="SUPFAM" id="SSF48300">
    <property type="entry name" value="Ribosomal protein L7/12, oligomerisation (N-terminal) domain"/>
    <property type="match status" value="1"/>
</dbReference>
<name>RL7_SHIF8</name>
<feature type="chain" id="PRO_1000007090" description="Large ribosomal subunit protein bL12">
    <location>
        <begin position="1"/>
        <end position="121"/>
    </location>
</feature>
<reference key="1">
    <citation type="journal article" date="2006" name="BMC Genomics">
        <title>Complete genome sequence of Shigella flexneri 5b and comparison with Shigella flexneri 2a.</title>
        <authorList>
            <person name="Nie H."/>
            <person name="Yang F."/>
            <person name="Zhang X."/>
            <person name="Yang J."/>
            <person name="Chen L."/>
            <person name="Wang J."/>
            <person name="Xiong Z."/>
            <person name="Peng J."/>
            <person name="Sun L."/>
            <person name="Dong J."/>
            <person name="Xue Y."/>
            <person name="Xu X."/>
            <person name="Chen S."/>
            <person name="Yao Z."/>
            <person name="Shen Y."/>
            <person name="Jin Q."/>
        </authorList>
    </citation>
    <scope>NUCLEOTIDE SEQUENCE [LARGE SCALE GENOMIC DNA]</scope>
    <source>
        <strain>8401</strain>
    </source>
</reference>
<evidence type="ECO:0000255" key="1">
    <source>
        <dbReference type="HAMAP-Rule" id="MF_00368"/>
    </source>
</evidence>
<evidence type="ECO:0000305" key="2"/>
<accession>Q0SY14</accession>